<protein>
    <recommendedName>
        <fullName>Cohesin subunit SCC3</fullName>
    </recommendedName>
    <alternativeName>
        <fullName>Irregular cell behavior protein 1</fullName>
    </alternativeName>
</protein>
<comment type="function">
    <text>Component of cohesin complex, a complex required for the cohesion of sister chromatids after DNA replication. The cohesin complex apparently forms a large proteinaceous ring within which sister chromatids can be trapped. At anaphase, the MCD1/SCC1 subunit of the complex is cleaved and dissociates from chromatin, allowing sister chromatids to segregate. The cohesin complex may also play a role in spindle pole assembly during mitosis.</text>
</comment>
<comment type="subunit">
    <text evidence="5 6 8">Interacts directly with MCD1 in cohesin complex. Cohesin complexes are composed of the SMC1 and SMC3 heterodimer attached via their hinge domain, MCD1 which link them, and IRR1/SCC3, which interacts with MCD1. The cohesin complex also interacts with SCC2, which is required for its association with chromosomes. Interacts with LIN1.</text>
</comment>
<comment type="interaction">
    <interactant intactId="EBI-16667">
        <id>P40541</id>
    </interactant>
    <interactant intactId="EBI-16655">
        <id>Q12158</id>
        <label>MCD1</label>
    </interactant>
    <organismsDiffer>false</organismsDiffer>
    <experiments>8</experiments>
</comment>
<comment type="subcellular location">
    <subcellularLocation>
        <location evidence="2 8">Nucleus</location>
    </subcellularLocation>
    <subcellularLocation>
        <location evidence="8">Chromosome</location>
    </subcellularLocation>
    <subcellularLocation>
        <location evidence="8">Chromosome</location>
        <location evidence="8">Centromere</location>
    </subcellularLocation>
    <text>Associates with chromatin. Before prophase it is scattered along chromosome arms. During prophase, most of cohesin complexes dissociate from chromatin except at centromeres, where cohesin complexes remain. At anaphase, the MCD1 subunit of the cohesin complex is cleaved, leading to the dissociation of the complex from chromosomes, allowing chromosome separation.</text>
</comment>
<comment type="PTM">
    <text evidence="4">Acetylated by ECO1.</text>
</comment>
<comment type="miscellaneous">
    <text evidence="7">Present with 4090 molecules/cell in log phase SD medium.</text>
</comment>
<comment type="similarity">
    <text evidence="9">Belongs to the SCC3 family.</text>
</comment>
<dbReference type="EMBL" id="U17918">
    <property type="protein sequence ID" value="AAC49039.1"/>
    <property type="molecule type" value="Genomic_DNA"/>
</dbReference>
<dbReference type="EMBL" id="Z46881">
    <property type="protein sequence ID" value="CAA86966.1"/>
    <property type="molecule type" value="Genomic_DNA"/>
</dbReference>
<dbReference type="EMBL" id="BK006942">
    <property type="protein sequence ID" value="DAA08520.1"/>
    <property type="molecule type" value="Genomic_DNA"/>
</dbReference>
<dbReference type="PIR" id="S49956">
    <property type="entry name" value="S49956"/>
</dbReference>
<dbReference type="RefSeq" id="NP_012238.1">
    <property type="nucleotide sequence ID" value="NM_001179376.1"/>
</dbReference>
<dbReference type="PDB" id="4UVJ">
    <property type="method" value="X-ray"/>
    <property type="resolution" value="2.10 A"/>
    <property type="chains" value="A/B=674-1072"/>
</dbReference>
<dbReference type="PDB" id="6H8Q">
    <property type="method" value="X-ray"/>
    <property type="resolution" value="3.63 A"/>
    <property type="chains" value="A/B=1-1150"/>
</dbReference>
<dbReference type="PDBsum" id="4UVJ"/>
<dbReference type="PDBsum" id="6H8Q"/>
<dbReference type="SMR" id="P40541"/>
<dbReference type="BioGRID" id="34963">
    <property type="interactions" value="110"/>
</dbReference>
<dbReference type="ComplexPortal" id="CPX-1408">
    <property type="entry name" value="Nuclear meiotic cohesin complex"/>
</dbReference>
<dbReference type="ComplexPortal" id="CPX-1867">
    <property type="entry name" value="Nuclear mitotic cohesin complex"/>
</dbReference>
<dbReference type="DIP" id="DIP-5640N"/>
<dbReference type="FunCoup" id="P40541">
    <property type="interactions" value="351"/>
</dbReference>
<dbReference type="IntAct" id="P40541">
    <property type="interactions" value="22"/>
</dbReference>
<dbReference type="MINT" id="P40541"/>
<dbReference type="STRING" id="4932.YIL026C"/>
<dbReference type="iPTMnet" id="P40541"/>
<dbReference type="PaxDb" id="4932-YIL026C"/>
<dbReference type="PeptideAtlas" id="P40541"/>
<dbReference type="EnsemblFungi" id="YIL026C_mRNA">
    <property type="protein sequence ID" value="YIL026C"/>
    <property type="gene ID" value="YIL026C"/>
</dbReference>
<dbReference type="GeneID" id="854786"/>
<dbReference type="KEGG" id="sce:YIL026C"/>
<dbReference type="AGR" id="SGD:S000001288"/>
<dbReference type="SGD" id="S000001288">
    <property type="gene designation" value="IRR1"/>
</dbReference>
<dbReference type="VEuPathDB" id="FungiDB:YIL026C"/>
<dbReference type="eggNOG" id="KOG2011">
    <property type="taxonomic scope" value="Eukaryota"/>
</dbReference>
<dbReference type="GeneTree" id="ENSGT00950000182972"/>
<dbReference type="HOGENOM" id="CLU_008263_0_0_1"/>
<dbReference type="InParanoid" id="P40541"/>
<dbReference type="OMA" id="FVHRFKD"/>
<dbReference type="OrthoDB" id="498590at2759"/>
<dbReference type="BioCyc" id="YEAST:G3O-31300-MONOMER"/>
<dbReference type="Reactome" id="R-SCE-2468052">
    <property type="pathway name" value="Establishment of Sister Chromatid Cohesion"/>
</dbReference>
<dbReference type="Reactome" id="R-SCE-2500257">
    <property type="pathway name" value="Resolution of Sister Chromatid Cohesion"/>
</dbReference>
<dbReference type="Reactome" id="R-SCE-3108214">
    <property type="pathway name" value="SUMOylation of DNA damage response and repair proteins"/>
</dbReference>
<dbReference type="BioGRID-ORCS" id="854786">
    <property type="hits" value="1 hit in 10 CRISPR screens"/>
</dbReference>
<dbReference type="CD-CODE" id="5F622AE2">
    <property type="entry name" value="Synthetic Condensate 000372"/>
</dbReference>
<dbReference type="EvolutionaryTrace" id="P40541"/>
<dbReference type="PRO" id="PR:P40541"/>
<dbReference type="Proteomes" id="UP000002311">
    <property type="component" value="Chromosome IX"/>
</dbReference>
<dbReference type="RNAct" id="P40541">
    <property type="molecule type" value="protein"/>
</dbReference>
<dbReference type="GO" id="GO:0000785">
    <property type="term" value="C:chromatin"/>
    <property type="evidence" value="ECO:0000318"/>
    <property type="project" value="GO_Central"/>
</dbReference>
<dbReference type="GO" id="GO:0000775">
    <property type="term" value="C:chromosome, centromeric region"/>
    <property type="evidence" value="ECO:0007669"/>
    <property type="project" value="UniProtKB-SubCell"/>
</dbReference>
<dbReference type="GO" id="GO:0008278">
    <property type="term" value="C:cohesin complex"/>
    <property type="evidence" value="ECO:0000318"/>
    <property type="project" value="GO_Central"/>
</dbReference>
<dbReference type="GO" id="GO:0005737">
    <property type="term" value="C:cytoplasm"/>
    <property type="evidence" value="ECO:0000314"/>
    <property type="project" value="SGD"/>
</dbReference>
<dbReference type="GO" id="GO:0005829">
    <property type="term" value="C:cytosol"/>
    <property type="evidence" value="ECO:0000314"/>
    <property type="project" value="SGD"/>
</dbReference>
<dbReference type="GO" id="GO:0030893">
    <property type="term" value="C:meiotic cohesin complex"/>
    <property type="evidence" value="ECO:0000303"/>
    <property type="project" value="ComplexPortal"/>
</dbReference>
<dbReference type="GO" id="GO:0030892">
    <property type="term" value="C:mitotic cohesin complex"/>
    <property type="evidence" value="ECO:0000314"/>
    <property type="project" value="SGD"/>
</dbReference>
<dbReference type="GO" id="GO:0005634">
    <property type="term" value="C:nucleus"/>
    <property type="evidence" value="ECO:0000314"/>
    <property type="project" value="SGD"/>
</dbReference>
<dbReference type="GO" id="GO:0003682">
    <property type="term" value="F:chromatin binding"/>
    <property type="evidence" value="ECO:0000314"/>
    <property type="project" value="SGD"/>
</dbReference>
<dbReference type="GO" id="GO:0051301">
    <property type="term" value="P:cell division"/>
    <property type="evidence" value="ECO:0007669"/>
    <property type="project" value="UniProtKB-KW"/>
</dbReference>
<dbReference type="GO" id="GO:0007059">
    <property type="term" value="P:chromosome segregation"/>
    <property type="evidence" value="ECO:0007669"/>
    <property type="project" value="UniProtKB-KW"/>
</dbReference>
<dbReference type="GO" id="GO:0034089">
    <property type="term" value="P:establishment of meiotic sister chromatid cohesion"/>
    <property type="evidence" value="ECO:0000303"/>
    <property type="project" value="ComplexPortal"/>
</dbReference>
<dbReference type="GO" id="GO:0034087">
    <property type="term" value="P:establishment of mitotic sister chromatid cohesion"/>
    <property type="evidence" value="ECO:0000303"/>
    <property type="project" value="ComplexPortal"/>
</dbReference>
<dbReference type="GO" id="GO:0007064">
    <property type="term" value="P:mitotic sister chromatid cohesion"/>
    <property type="evidence" value="ECO:0000315"/>
    <property type="project" value="SGD"/>
</dbReference>
<dbReference type="GO" id="GO:0006473">
    <property type="term" value="P:protein acetylation"/>
    <property type="evidence" value="ECO:0000314"/>
    <property type="project" value="UniProtKB"/>
</dbReference>
<dbReference type="GO" id="GO:0007062">
    <property type="term" value="P:sister chromatid cohesion"/>
    <property type="evidence" value="ECO:0000318"/>
    <property type="project" value="GO_Central"/>
</dbReference>
<dbReference type="InterPro" id="IPR016024">
    <property type="entry name" value="ARM-type_fold"/>
</dbReference>
<dbReference type="InterPro" id="IPR039662">
    <property type="entry name" value="Cohesin_Scc3/SA"/>
</dbReference>
<dbReference type="InterPro" id="IPR048610">
    <property type="entry name" value="SCC3_C"/>
</dbReference>
<dbReference type="InterPro" id="IPR020839">
    <property type="entry name" value="SCD"/>
</dbReference>
<dbReference type="InterPro" id="IPR013721">
    <property type="entry name" value="STAG"/>
</dbReference>
<dbReference type="PANTHER" id="PTHR11199:SF0">
    <property type="entry name" value="LD34181P-RELATED"/>
    <property type="match status" value="1"/>
</dbReference>
<dbReference type="PANTHER" id="PTHR11199">
    <property type="entry name" value="STROMAL ANTIGEN"/>
    <property type="match status" value="1"/>
</dbReference>
<dbReference type="Pfam" id="PF21767">
    <property type="entry name" value="SCC3_C"/>
    <property type="match status" value="1"/>
</dbReference>
<dbReference type="Pfam" id="PF21581">
    <property type="entry name" value="SCD"/>
    <property type="match status" value="1"/>
</dbReference>
<dbReference type="Pfam" id="PF08514">
    <property type="entry name" value="STAG"/>
    <property type="match status" value="1"/>
</dbReference>
<dbReference type="SUPFAM" id="SSF48371">
    <property type="entry name" value="ARM repeat"/>
    <property type="match status" value="1"/>
</dbReference>
<dbReference type="PROSITE" id="PS51425">
    <property type="entry name" value="SCD"/>
    <property type="match status" value="1"/>
</dbReference>
<reference key="1">
    <citation type="journal article" date="1995" name="Yeast">
        <title>A new essential gene located on Saccharomyces cerevisiae chromosome IX.</title>
        <authorList>
            <person name="Kurlandzka A."/>
            <person name="Rytka J."/>
            <person name="Gromadka R."/>
            <person name="Murawski M."/>
        </authorList>
    </citation>
    <scope>NUCLEOTIDE SEQUENCE [GENOMIC DNA]</scope>
    <scope>CHARACTERIZATION</scope>
</reference>
<reference key="2">
    <citation type="journal article" date="1997" name="Nature">
        <title>The nucleotide sequence of Saccharomyces cerevisiae chromosome IX.</title>
        <authorList>
            <person name="Churcher C.M."/>
            <person name="Bowman S."/>
            <person name="Badcock K."/>
            <person name="Bankier A.T."/>
            <person name="Brown D."/>
            <person name="Chillingworth T."/>
            <person name="Connor R."/>
            <person name="Devlin K."/>
            <person name="Gentles S."/>
            <person name="Hamlin N."/>
            <person name="Harris D.E."/>
            <person name="Horsnell T."/>
            <person name="Hunt S."/>
            <person name="Jagels K."/>
            <person name="Jones M."/>
            <person name="Lye G."/>
            <person name="Moule S."/>
            <person name="Odell C."/>
            <person name="Pearson D."/>
            <person name="Rajandream M.A."/>
            <person name="Rice P."/>
            <person name="Rowley N."/>
            <person name="Skelton J."/>
            <person name="Smith V."/>
            <person name="Walsh S.V."/>
            <person name="Whitehead S."/>
            <person name="Barrell B.G."/>
        </authorList>
    </citation>
    <scope>NUCLEOTIDE SEQUENCE [LARGE SCALE GENOMIC DNA]</scope>
    <source>
        <strain>ATCC 204508 / S288c</strain>
    </source>
</reference>
<reference key="3">
    <citation type="journal article" date="2014" name="G3 (Bethesda)">
        <title>The reference genome sequence of Saccharomyces cerevisiae: Then and now.</title>
        <authorList>
            <person name="Engel S.R."/>
            <person name="Dietrich F.S."/>
            <person name="Fisk D.G."/>
            <person name="Binkley G."/>
            <person name="Balakrishnan R."/>
            <person name="Costanzo M.C."/>
            <person name="Dwight S.S."/>
            <person name="Hitz B.C."/>
            <person name="Karra K."/>
            <person name="Nash R.S."/>
            <person name="Weng S."/>
            <person name="Wong E.D."/>
            <person name="Lloyd P."/>
            <person name="Skrzypek M.S."/>
            <person name="Miyasato S.R."/>
            <person name="Simison M."/>
            <person name="Cherry J.M."/>
        </authorList>
    </citation>
    <scope>GENOME REANNOTATION</scope>
    <source>
        <strain>ATCC 204508 / S288c</strain>
    </source>
</reference>
<reference key="4">
    <citation type="journal article" date="1999" name="Genes Dev.">
        <title>Yeast cohesin complex requires a conserved protein, Eco1p(Ctf7), to establish cohesion between sister chromatids during DNA replication.</title>
        <authorList>
            <person name="Toth A."/>
            <person name="Ciosk R."/>
            <person name="Uhlmann F."/>
            <person name="Galova M."/>
            <person name="Schleiffer A."/>
            <person name="Nasmyth K."/>
        </authorList>
    </citation>
    <scope>SUBCELLULAR LOCATION</scope>
    <scope>INTERACTION WITH MCD1</scope>
    <scope>IDENTIFICATION IN A COHESIN COMPLEX WITH SMC1; SMC3 AND MCD1</scope>
    <scope>INTERACTION OF THE COHESIN COMPLEX WITH SCC2</scope>
</reference>
<reference key="5">
    <citation type="journal article" date="2002" name="Yeast">
        <title>Proteins interacting with Lin 1p, a putative link between chromosome segregation, mRNA splicing and DNA replication in Saccharomyces cerevisiae.</title>
        <authorList>
            <person name="Bialkowska A."/>
            <person name="Kurlandzka A."/>
        </authorList>
    </citation>
    <scope>INTERACTION WITH LIN1</scope>
</reference>
<reference key="6">
    <citation type="journal article" date="2002" name="Mol. Cell">
        <title>Molecular architecture of SMC proteins and the yeast cohesin complex.</title>
        <authorList>
            <person name="Haering C.H."/>
            <person name="Loewe J."/>
            <person name="Hochwagen A."/>
            <person name="Nasmyth K."/>
        </authorList>
    </citation>
    <scope>IDENTIFICATION IN A COHESIN COMPLEX WITH SMC1; SMC3 AND MCD1</scope>
    <scope>STRUCTURE</scope>
</reference>
<reference key="7">
    <citation type="journal article" date="2002" name="Curr. Biol.">
        <title>Eco1 is a novel acetyltransferase that can acetylate proteins involved in cohesion.</title>
        <authorList>
            <person name="Ivanov D."/>
            <person name="Schleiffer A."/>
            <person name="Eisenhaber F."/>
            <person name="Mechtler K."/>
            <person name="Haering C.H."/>
            <person name="Nasmyth K."/>
        </authorList>
    </citation>
    <scope>ACETYLATION</scope>
</reference>
<reference key="8">
    <citation type="journal article" date="2003" name="Nature">
        <title>Global analysis of protein expression in yeast.</title>
        <authorList>
            <person name="Ghaemmaghami S."/>
            <person name="Huh W.-K."/>
            <person name="Bower K."/>
            <person name="Howson R.W."/>
            <person name="Belle A."/>
            <person name="Dephoure N."/>
            <person name="O'Shea E.K."/>
            <person name="Weissman J.S."/>
        </authorList>
    </citation>
    <scope>LEVEL OF PROTEIN EXPRESSION [LARGE SCALE ANALYSIS]</scope>
</reference>
<reference key="9">
    <citation type="journal article" date="2008" name="Mol. Cell. Proteomics">
        <title>A multidimensional chromatography technology for in-depth phosphoproteome analysis.</title>
        <authorList>
            <person name="Albuquerque C.P."/>
            <person name="Smolka M.B."/>
            <person name="Payne S.H."/>
            <person name="Bafna V."/>
            <person name="Eng J."/>
            <person name="Zhou H."/>
        </authorList>
    </citation>
    <scope>IDENTIFICATION BY MASS SPECTROMETRY [LARGE SCALE ANALYSIS]</scope>
</reference>
<reference key="10">
    <citation type="journal article" date="2009" name="Science">
        <title>Global analysis of Cdk1 substrate phosphorylation sites provides insights into evolution.</title>
        <authorList>
            <person name="Holt L.J."/>
            <person name="Tuch B.B."/>
            <person name="Villen J."/>
            <person name="Johnson A.D."/>
            <person name="Gygi S.P."/>
            <person name="Morgan D.O."/>
        </authorList>
    </citation>
    <scope>PHOSPHORYLATION [LARGE SCALE ANALYSIS] AT SER-28 AND SER-628</scope>
    <scope>IDENTIFICATION BY MASS SPECTROMETRY [LARGE SCALE ANALYSIS]</scope>
</reference>
<feature type="chain" id="PRO_0000120191" description="Cohesin subunit SCC3">
    <location>
        <begin position="1"/>
        <end position="1150"/>
    </location>
</feature>
<feature type="domain" description="SCD" evidence="2">
    <location>
        <begin position="367"/>
        <end position="457"/>
    </location>
</feature>
<feature type="region of interest" description="Disordered" evidence="3">
    <location>
        <begin position="1"/>
        <end position="122"/>
    </location>
</feature>
<feature type="region of interest" description="Disordered" evidence="3">
    <location>
        <begin position="1065"/>
        <end position="1150"/>
    </location>
</feature>
<feature type="coiled-coil region" evidence="1">
    <location>
        <begin position="305"/>
        <end position="349"/>
    </location>
</feature>
<feature type="compositionally biased region" description="Basic residues" evidence="3">
    <location>
        <begin position="1"/>
        <end position="12"/>
    </location>
</feature>
<feature type="compositionally biased region" description="Basic and acidic residues" evidence="3">
    <location>
        <begin position="32"/>
        <end position="43"/>
    </location>
</feature>
<feature type="compositionally biased region" description="Acidic residues" evidence="3">
    <location>
        <begin position="44"/>
        <end position="72"/>
    </location>
</feature>
<feature type="compositionally biased region" description="Basic residues" evidence="3">
    <location>
        <begin position="77"/>
        <end position="87"/>
    </location>
</feature>
<feature type="compositionally biased region" description="Basic and acidic residues" evidence="3">
    <location>
        <begin position="1083"/>
        <end position="1101"/>
    </location>
</feature>
<feature type="modified residue" description="Phosphoserine" evidence="10">
    <location>
        <position position="28"/>
    </location>
</feature>
<feature type="modified residue" description="Phosphoserine" evidence="10">
    <location>
        <position position="628"/>
    </location>
</feature>
<feature type="sequence conflict" description="In Ref. 1; AAC49039." evidence="9" ref="1">
    <original>V</original>
    <variation>G</variation>
    <location>
        <position position="939"/>
    </location>
</feature>
<feature type="helix" evidence="11">
    <location>
        <begin position="675"/>
        <end position="678"/>
    </location>
</feature>
<feature type="helix" evidence="11">
    <location>
        <begin position="680"/>
        <end position="691"/>
    </location>
</feature>
<feature type="helix" evidence="11">
    <location>
        <begin position="700"/>
        <end position="707"/>
    </location>
</feature>
<feature type="helix" evidence="11">
    <location>
        <begin position="721"/>
        <end position="736"/>
    </location>
</feature>
<feature type="turn" evidence="11">
    <location>
        <begin position="742"/>
        <end position="744"/>
    </location>
</feature>
<feature type="helix" evidence="11">
    <location>
        <begin position="747"/>
        <end position="761"/>
    </location>
</feature>
<feature type="helix" evidence="11">
    <location>
        <begin position="764"/>
        <end position="788"/>
    </location>
</feature>
<feature type="helix" evidence="11">
    <location>
        <begin position="798"/>
        <end position="808"/>
    </location>
</feature>
<feature type="helix" evidence="11">
    <location>
        <begin position="810"/>
        <end position="819"/>
    </location>
</feature>
<feature type="helix" evidence="11">
    <location>
        <begin position="826"/>
        <end position="835"/>
    </location>
</feature>
<feature type="helix" evidence="11">
    <location>
        <begin position="837"/>
        <end position="839"/>
    </location>
</feature>
<feature type="helix" evidence="11">
    <location>
        <begin position="840"/>
        <end position="843"/>
    </location>
</feature>
<feature type="helix" evidence="11">
    <location>
        <begin position="844"/>
        <end position="846"/>
    </location>
</feature>
<feature type="helix" evidence="11">
    <location>
        <begin position="849"/>
        <end position="854"/>
    </location>
</feature>
<feature type="helix" evidence="11">
    <location>
        <begin position="858"/>
        <end position="876"/>
    </location>
</feature>
<feature type="turn" evidence="11">
    <location>
        <begin position="890"/>
        <end position="893"/>
    </location>
</feature>
<feature type="helix" evidence="11">
    <location>
        <begin position="894"/>
        <end position="911"/>
    </location>
</feature>
<feature type="turn" evidence="11">
    <location>
        <begin position="917"/>
        <end position="919"/>
    </location>
</feature>
<feature type="helix" evidence="11">
    <location>
        <begin position="920"/>
        <end position="946"/>
    </location>
</feature>
<feature type="helix" evidence="11">
    <location>
        <begin position="953"/>
        <end position="962"/>
    </location>
</feature>
<feature type="helix" evidence="11">
    <location>
        <begin position="969"/>
        <end position="989"/>
    </location>
</feature>
<feature type="helix" evidence="11">
    <location>
        <begin position="1002"/>
        <end position="1005"/>
    </location>
</feature>
<feature type="helix" evidence="11">
    <location>
        <begin position="1016"/>
        <end position="1032"/>
    </location>
</feature>
<feature type="helix" evidence="11">
    <location>
        <begin position="1038"/>
        <end position="1045"/>
    </location>
</feature>
<feature type="turn" evidence="11">
    <location>
        <begin position="1046"/>
        <end position="1050"/>
    </location>
</feature>
<feature type="helix" evidence="11">
    <location>
        <begin position="1053"/>
        <end position="1058"/>
    </location>
</feature>
<proteinExistence type="evidence at protein level"/>
<evidence type="ECO:0000255" key="1"/>
<evidence type="ECO:0000255" key="2">
    <source>
        <dbReference type="PROSITE-ProRule" id="PRU00750"/>
    </source>
</evidence>
<evidence type="ECO:0000256" key="3">
    <source>
        <dbReference type="SAM" id="MobiDB-lite"/>
    </source>
</evidence>
<evidence type="ECO:0000269" key="4">
    <source>
    </source>
</evidence>
<evidence type="ECO:0000269" key="5">
    <source>
    </source>
</evidence>
<evidence type="ECO:0000269" key="6">
    <source>
    </source>
</evidence>
<evidence type="ECO:0000269" key="7">
    <source>
    </source>
</evidence>
<evidence type="ECO:0000269" key="8">
    <source>
    </source>
</evidence>
<evidence type="ECO:0000305" key="9"/>
<evidence type="ECO:0007744" key="10">
    <source>
    </source>
</evidence>
<evidence type="ECO:0007829" key="11">
    <source>
        <dbReference type="PDB" id="4UVJ"/>
    </source>
</evidence>
<accession>P40541</accession>
<accession>D6VVQ4</accession>
<accession>Q02511</accession>
<organism>
    <name type="scientific">Saccharomyces cerevisiae (strain ATCC 204508 / S288c)</name>
    <name type="common">Baker's yeast</name>
    <dbReference type="NCBI Taxonomy" id="559292"/>
    <lineage>
        <taxon>Eukaryota</taxon>
        <taxon>Fungi</taxon>
        <taxon>Dikarya</taxon>
        <taxon>Ascomycota</taxon>
        <taxon>Saccharomycotina</taxon>
        <taxon>Saccharomycetes</taxon>
        <taxon>Saccharomycetales</taxon>
        <taxon>Saccharomycetaceae</taxon>
        <taxon>Saccharomyces</taxon>
    </lineage>
</organism>
<sequence>MTAVRRSTRIRTKSQVIEEDYDDEQNTSAQHVESDKITAKTQHEEEEEQDTGESEESSSEDDYEDQDDDDYVDTATAKRKSRKRKPKSASNTSSKRQKKKPTSAQKSAVSHAPAYHRSKKDQDQYLEIAKDFQPTELFDILSTSEDVSIEELLREWLETYSENRDKFLQEFINLLLNCCGSVARVEDHDVHSNESSNETIGEIQLLFQRQKLHEFYLLISKENKKRKNFKMGPLYQNFAEFMTKLLEVANDLQLLYVESDEDDTQIVTGNLVLDLLTWLSSFSVCKIRCFRYISTLTLYLFQDYLTQQAVNLEKNYLAKLSKQLSLEEKKKRPNNKTLEKLESTIAETQGSKVVIDSIIDNIVKLCFVHRYKDVSDLIRSESMLHLSIWIKNYPEYFLKVTFLKYFGWLLSDNSVSVRLQVTKILPHLIIQNHNSKSTDNSAIRQVFERFKTKILEVAIRDVNLDVRIHSIQVLTEASSLGYLDDSEILIISSLMFDEEFDPFKTSSFNKRSKFLSTVAKFLARVIKEKFDEFIKTHEDLPKEVDGLEVGPVVQVGIFIKILNDSLIYHLKDCAEVDSRTKIRMLTQAAEFLSPYISTHLKTICNLLISDTESNELIQKLQNSANNNSDDEDVDDEELDITPLFPIDRNSTILYLNVFHGLCAGANNPKIQTKDSVKEIVLPLFYDLLNAASIESADILCPLLESFITFSLDDWISIGYETELKKITDKTIKAFMDSTIGNSKVDMKYDIFAKFIHHIHHFEKKELQEKFLNQIATLKIHLKKFLQEKMDPNNSRDDYKDLTCSLYELYINKLTILGRDYPIEVDEELLQLFLNNFVSRIPIMFQDFDDSTAQEINFKMLVLLATWNLEKWREIIEKVRDYENSISKDLRSVWKPIAAIIGRLNTLVISLAATNETFENINSLFYLKWSACTSLMDIIVAIKIFELKLPADATTWRYSMSEQFPFYLHDNASKVLLKIFLYLESLFAKQVDVQLERVADEDANLNDLPETGFFENIETEFLLFTVKLKGLMKLNILDERFASRVALNKEKLGPLFKKIVDDTIMENPEPNKKNIQKAKSNQTQREKAPLQPNSERETDHANTENNDPDIPMTIDLEPIEESSQNNSELAPIEEHPTVVDAIDNSDEITQD</sequence>
<gene>
    <name type="primary">IRR1</name>
    <name type="synonym">SCC3</name>
    <name type="ordered locus">YIL026C</name>
</gene>
<keyword id="KW-0002">3D-structure</keyword>
<keyword id="KW-0007">Acetylation</keyword>
<keyword id="KW-0131">Cell cycle</keyword>
<keyword id="KW-0132">Cell division</keyword>
<keyword id="KW-0137">Centromere</keyword>
<keyword id="KW-0158">Chromosome</keyword>
<keyword id="KW-0159">Chromosome partition</keyword>
<keyword id="KW-0175">Coiled coil</keyword>
<keyword id="KW-0498">Mitosis</keyword>
<keyword id="KW-0539">Nucleus</keyword>
<keyword id="KW-0597">Phosphoprotein</keyword>
<keyword id="KW-1185">Reference proteome</keyword>
<name>SCC3_YEAST</name>